<reference key="1">
    <citation type="journal article" date="1995" name="Virology">
        <title>Comparative nucleotide and amino acid sequence analysis of the sequence-specific RNA-binding rotavirus nonstructural protein NSP3.</title>
        <authorList>
            <person name="Rao C.D."/>
            <person name="Das M."/>
            <person name="Ilango P."/>
            <person name="Lalwani R."/>
            <person name="Rao B.S."/>
            <person name="Gowda K."/>
        </authorList>
    </citation>
    <scope>NUCLEOTIDE SEQUENCE [MRNA]</scope>
</reference>
<reference key="2">
    <citation type="journal article" date="2008" name="J. Virol.">
        <title>Group A human rotavirus genomics: evidence that gene constellations are influenced by viral protein interactions.</title>
        <authorList>
            <person name="Heiman E.M."/>
            <person name="McDonald S.M."/>
            <person name="Barro M."/>
            <person name="Taraporewala Z.F."/>
            <person name="Bar-Magen T."/>
            <person name="Patton J.T."/>
        </authorList>
    </citation>
    <scope>NUCLEOTIDE SEQUENCE [GENOMIC RNA] OF 4-313</scope>
</reference>
<protein>
    <recommendedName>
        <fullName evidence="1">Non-structural protein 3</fullName>
        <shortName evidence="1">NSP3</shortName>
    </recommendedName>
    <alternativeName>
        <fullName evidence="1">NCVP4</fullName>
    </alternativeName>
    <alternativeName>
        <fullName evidence="1">Non-structural RNA-binding protein 34</fullName>
        <shortName evidence="1">NS34</shortName>
    </alternativeName>
</protein>
<comment type="function">
    <text evidence="1">Plays an important role in stimulating the translation of viral mRNAs. These mRNAs are capped but not polyadenylated, instead terminating in a conserved sequence 'GACC' at the 3' that is recognized by NSP3, which competes with host PABPC1 for EIF4G1 binding. The interaction between NSP3 and host EIF4G1 stabilizes the EIF4E-EIF4G1 interaction, thereby facilitating the initiation of capped mRNA translation.</text>
</comment>
<comment type="subunit">
    <text evidence="1">Homodimer. Interacts (via the coiled-coil region) with host ZC3H7B (via LD motif). Interacts with host EIF4G1.</text>
</comment>
<comment type="subcellular location">
    <subcellularLocation>
        <location evidence="1">Host cytoplasm</location>
    </subcellularLocation>
</comment>
<comment type="similarity">
    <text evidence="1">Belongs to the rotavirus NSP3 family.</text>
</comment>
<name>NSP3_ROTHT</name>
<evidence type="ECO:0000255" key="1">
    <source>
        <dbReference type="HAMAP-Rule" id="MF_04094"/>
    </source>
</evidence>
<accession>Q82053</accession>
<accession>B3SRW9</accession>
<keyword id="KW-0175">Coiled coil</keyword>
<keyword id="KW-1035">Host cytoplasm</keyword>
<keyword id="KW-0945">Host-virus interaction</keyword>
<keyword id="KW-0694">RNA-binding</keyword>
<keyword id="KW-0810">Translation regulation</keyword>
<dbReference type="EMBL" id="X81436">
    <property type="protein sequence ID" value="CAA57195.1"/>
    <property type="molecule type" value="mRNA"/>
</dbReference>
<dbReference type="EMBL" id="EF672614">
    <property type="protein sequence ID" value="ABV53294.1"/>
    <property type="molecule type" value="Genomic_RNA"/>
</dbReference>
<dbReference type="PIR" id="S51730">
    <property type="entry name" value="S51730"/>
</dbReference>
<dbReference type="SMR" id="Q82053"/>
<dbReference type="Proteomes" id="UP000007048">
    <property type="component" value="Genome"/>
</dbReference>
<dbReference type="GO" id="GO:0030430">
    <property type="term" value="C:host cell cytoplasm"/>
    <property type="evidence" value="ECO:0007669"/>
    <property type="project" value="UniProtKB-SubCell"/>
</dbReference>
<dbReference type="GO" id="GO:0003723">
    <property type="term" value="F:RNA binding"/>
    <property type="evidence" value="ECO:0007669"/>
    <property type="project" value="UniProtKB-UniRule"/>
</dbReference>
<dbReference type="GO" id="GO:0006417">
    <property type="term" value="P:regulation of translation"/>
    <property type="evidence" value="ECO:0007669"/>
    <property type="project" value="UniProtKB-UniRule"/>
</dbReference>
<dbReference type="CDD" id="cd20714">
    <property type="entry name" value="NSP3_rotavirus"/>
    <property type="match status" value="1"/>
</dbReference>
<dbReference type="Gene3D" id="3.30.70.1610">
    <property type="match status" value="1"/>
</dbReference>
<dbReference type="Gene3D" id="1.20.5.970">
    <property type="entry name" value="Nonstructural RNA-binding protein"/>
    <property type="match status" value="1"/>
</dbReference>
<dbReference type="Gene3D" id="6.10.280.20">
    <property type="entry name" value="Rotavirus non-structural protein NSP3, N-terminal domain"/>
    <property type="match status" value="1"/>
</dbReference>
<dbReference type="HAMAP" id="MF_04094">
    <property type="entry name" value="ROTA_A_NSP3"/>
    <property type="match status" value="1"/>
</dbReference>
<dbReference type="HAMAP" id="MF_04090">
    <property type="entry name" value="ROTA_NSP3"/>
    <property type="match status" value="1"/>
</dbReference>
<dbReference type="InterPro" id="IPR042519">
    <property type="entry name" value="NSP3_N_rotavirus"/>
</dbReference>
<dbReference type="InterPro" id="IPR036082">
    <property type="entry name" value="NSP3_sf"/>
</dbReference>
<dbReference type="InterPro" id="IPR002873">
    <property type="entry name" value="Rotavirus_NSP3"/>
</dbReference>
<dbReference type="Pfam" id="PF01665">
    <property type="entry name" value="Rota_NSP3"/>
    <property type="match status" value="1"/>
</dbReference>
<dbReference type="SUPFAM" id="SSF69903">
    <property type="entry name" value="NSP3 homodimer"/>
    <property type="match status" value="1"/>
</dbReference>
<dbReference type="SUPFAM" id="SSF58030">
    <property type="entry name" value="Rotavirus nonstructural proteins"/>
    <property type="match status" value="1"/>
</dbReference>
<sequence>MLKMESTQQMVSSIINTSFEAAVVAATSTLELMGIQYDYNEVFTRVKSKFDYVMDDSGVKNNLLGKAITIAQALNGKFGSAIRNRNWMSDSKTVAKLDEDVNKLRMTLSSKGIDQKMRVLNACFSVKRIPGKSSSIIKCTRLMKDKIERGEVEVDDSYVDEKMEIDTIDWKSRYDQLEKRFESLKQRVNEKYNTWVQKAKKVNENMYSLQNVISQQQNQIADLQQYCNKLEADLQGKFSSLVSSVEWYLRSMELPDDVKTDIEQQLNSIDLINPINAIDDIESLIRNLIQDYDRTFLMLKGLLKQCNYEYAYE</sequence>
<feature type="chain" id="PRO_0000369453" description="Non-structural protein 3">
    <location>
        <begin position="1"/>
        <end position="313"/>
    </location>
</feature>
<feature type="region of interest" description="RNA-binding" evidence="1">
    <location>
        <begin position="1"/>
        <end position="149"/>
    </location>
</feature>
<feature type="region of interest" description="Dimerization" evidence="1">
    <location>
        <begin position="150"/>
        <end position="206"/>
    </location>
</feature>
<feature type="region of interest" description="Interaction with host ZC3H7B" evidence="1">
    <location>
        <begin position="170"/>
        <end position="234"/>
    </location>
</feature>
<feature type="region of interest" description="Interaction with host EIF4G1" evidence="1">
    <location>
        <begin position="208"/>
        <end position="313"/>
    </location>
</feature>
<feature type="coiled-coil region" evidence="1">
    <location>
        <begin position="166"/>
        <end position="237"/>
    </location>
</feature>
<feature type="sequence conflict" description="In Ref. 2; ABV53294." ref="2">
    <original>A</original>
    <variation>D</variation>
    <location>
        <position position="71"/>
    </location>
</feature>
<feature type="sequence conflict" description="In Ref. 2; ABV53294." ref="2">
    <original>S</original>
    <variation>T</variation>
    <location>
        <position position="89"/>
    </location>
</feature>
<organism>
    <name type="scientific">Rotavirus A (strain RVA/Human/United Kingdom/ST3/1975/G4P2A[6])</name>
    <name type="common">RV-A</name>
    <name type="synonym">Rotavirus A (strain St. Thomas 3)</name>
    <dbReference type="NCBI Taxonomy" id="10960"/>
    <lineage>
        <taxon>Viruses</taxon>
        <taxon>Riboviria</taxon>
        <taxon>Orthornavirae</taxon>
        <taxon>Duplornaviricota</taxon>
        <taxon>Resentoviricetes</taxon>
        <taxon>Reovirales</taxon>
        <taxon>Sedoreoviridae</taxon>
        <taxon>Rotavirus</taxon>
        <taxon>Rotavirus A</taxon>
    </lineage>
</organism>
<proteinExistence type="evidence at transcript level"/>
<organismHost>
    <name type="scientific">Homo sapiens</name>
    <name type="common">Human</name>
    <dbReference type="NCBI Taxonomy" id="9606"/>
</organismHost>